<organism>
    <name type="scientific">Limosilactobacillus fermentum (strain NBRC 3956 / LMG 18251)</name>
    <name type="common">Lactobacillus fermentum</name>
    <dbReference type="NCBI Taxonomy" id="334390"/>
    <lineage>
        <taxon>Bacteria</taxon>
        <taxon>Bacillati</taxon>
        <taxon>Bacillota</taxon>
        <taxon>Bacilli</taxon>
        <taxon>Lactobacillales</taxon>
        <taxon>Lactobacillaceae</taxon>
        <taxon>Limosilactobacillus</taxon>
    </lineage>
</organism>
<gene>
    <name evidence="1" type="primary">glyS</name>
    <name type="ordered locus">LAF_0843</name>
</gene>
<name>SYGB_LIMF3</name>
<keyword id="KW-0030">Aminoacyl-tRNA synthetase</keyword>
<keyword id="KW-0067">ATP-binding</keyword>
<keyword id="KW-0963">Cytoplasm</keyword>
<keyword id="KW-0436">Ligase</keyword>
<keyword id="KW-0547">Nucleotide-binding</keyword>
<keyword id="KW-0648">Protein biosynthesis</keyword>
<keyword id="KW-1185">Reference proteome</keyword>
<evidence type="ECO:0000255" key="1">
    <source>
        <dbReference type="HAMAP-Rule" id="MF_00255"/>
    </source>
</evidence>
<reference key="1">
    <citation type="journal article" date="2008" name="DNA Res.">
        <title>Comparative genome analysis of Lactobacillus reuteri and Lactobacillus fermentum reveal a genomic island for reuterin and cobalamin production.</title>
        <authorList>
            <person name="Morita H."/>
            <person name="Toh H."/>
            <person name="Fukuda S."/>
            <person name="Horikawa H."/>
            <person name="Oshima K."/>
            <person name="Suzuki T."/>
            <person name="Murakami M."/>
            <person name="Hisamatsu S."/>
            <person name="Kato Y."/>
            <person name="Takizawa T."/>
            <person name="Fukuoka H."/>
            <person name="Yoshimura T."/>
            <person name="Itoh K."/>
            <person name="O'Sullivan D.J."/>
            <person name="McKay L.L."/>
            <person name="Ohno H."/>
            <person name="Kikuchi J."/>
            <person name="Masaoka T."/>
            <person name="Hattori M."/>
        </authorList>
    </citation>
    <scope>NUCLEOTIDE SEQUENCE [LARGE SCALE GENOMIC DNA]</scope>
    <source>
        <strain>NBRC 3956 / LMG 18251</strain>
    </source>
</reference>
<feature type="chain" id="PRO_1000101292" description="Glycine--tRNA ligase beta subunit">
    <location>
        <begin position="1"/>
        <end position="692"/>
    </location>
</feature>
<accession>B2GBZ7</accession>
<proteinExistence type="inferred from homology"/>
<protein>
    <recommendedName>
        <fullName evidence="1">Glycine--tRNA ligase beta subunit</fullName>
        <ecNumber evidence="1">6.1.1.14</ecNumber>
    </recommendedName>
    <alternativeName>
        <fullName evidence="1">Glycyl-tRNA synthetase beta subunit</fullName>
        <shortName evidence="1">GlyRS</shortName>
    </alternativeName>
</protein>
<sequence>MAHSYLLEVGLEEMPAHVVTPSIQQLKTRVANYLTEERIDFEDIQAYSTPRRLALLISGLADKQPDVDESVKGPAKKIAQDADGNWTKAAIGFTRGQGATVDDIEFKEVKGVEYVYVEKHIQGKPVAEVLAGLNDVITAMNFPTLMRWGSFKLNFIRPIHWLVSLLDDQVVPFDILNVTAGRLTRGHRFLGHDVEIKSATDYVAALKDDFVIVDAAERKATIKDQIQAIVDQHNWVIDWDEELLEEVNNLVEWPTAFAGTFDQKYLELPEPVLITSMKDNQRFFCVRDHDGKLQPAFISVRNGNAVHLDNVIKGNERVLVPRLEDAKFFFDEDQKMTIDQYVDRLKNVSFHDQISSMYDKMARTKALANLLGQQLGLSDQELADLARAASIYKFDLTTQMVGEFAELQGIMGEIYAKRFGENEAVAAAVREHYMPISADGALPQTTVGTVLAIADKLDSIYSFFAVDMIPSGSNDPYALRRQAYGIVRMLADRKWHLNLLDFQASAKQAVEQATPALGLDYAKNADAVTDFFIDRLKQLFSLDHLRHDIVDAVTDTHVTDPAAIVEAAHVLDAHKDDADLKDQVEALTRVIRLAAKGNLSEDDVKVDPSLFENPSEGQLDQAVQALIDAKEGRSLDQQFSALLELEPVISLYFEENMIMDKDEAVKNNRLSLLTILADQTAAFGNLDQLIVK</sequence>
<comment type="catalytic activity">
    <reaction evidence="1">
        <text>tRNA(Gly) + glycine + ATP = glycyl-tRNA(Gly) + AMP + diphosphate</text>
        <dbReference type="Rhea" id="RHEA:16013"/>
        <dbReference type="Rhea" id="RHEA-COMP:9664"/>
        <dbReference type="Rhea" id="RHEA-COMP:9683"/>
        <dbReference type="ChEBI" id="CHEBI:30616"/>
        <dbReference type="ChEBI" id="CHEBI:33019"/>
        <dbReference type="ChEBI" id="CHEBI:57305"/>
        <dbReference type="ChEBI" id="CHEBI:78442"/>
        <dbReference type="ChEBI" id="CHEBI:78522"/>
        <dbReference type="ChEBI" id="CHEBI:456215"/>
        <dbReference type="EC" id="6.1.1.14"/>
    </reaction>
</comment>
<comment type="subunit">
    <text evidence="1">Tetramer of two alpha and two beta subunits.</text>
</comment>
<comment type="subcellular location">
    <subcellularLocation>
        <location evidence="1">Cytoplasm</location>
    </subcellularLocation>
</comment>
<comment type="similarity">
    <text evidence="1">Belongs to the class-II aminoacyl-tRNA synthetase family.</text>
</comment>
<dbReference type="EC" id="6.1.1.14" evidence="1"/>
<dbReference type="EMBL" id="AP008937">
    <property type="protein sequence ID" value="BAG27179.1"/>
    <property type="molecule type" value="Genomic_DNA"/>
</dbReference>
<dbReference type="RefSeq" id="WP_012391176.1">
    <property type="nucleotide sequence ID" value="NC_010610.1"/>
</dbReference>
<dbReference type="SMR" id="B2GBZ7"/>
<dbReference type="KEGG" id="lfe:LAF_0843"/>
<dbReference type="PATRIC" id="fig|334390.5.peg.927"/>
<dbReference type="eggNOG" id="COG0751">
    <property type="taxonomic scope" value="Bacteria"/>
</dbReference>
<dbReference type="HOGENOM" id="CLU_007220_2_2_9"/>
<dbReference type="Proteomes" id="UP000001697">
    <property type="component" value="Chromosome"/>
</dbReference>
<dbReference type="GO" id="GO:0005829">
    <property type="term" value="C:cytosol"/>
    <property type="evidence" value="ECO:0007669"/>
    <property type="project" value="TreeGrafter"/>
</dbReference>
<dbReference type="GO" id="GO:0005524">
    <property type="term" value="F:ATP binding"/>
    <property type="evidence" value="ECO:0007669"/>
    <property type="project" value="UniProtKB-UniRule"/>
</dbReference>
<dbReference type="GO" id="GO:0004820">
    <property type="term" value="F:glycine-tRNA ligase activity"/>
    <property type="evidence" value="ECO:0007669"/>
    <property type="project" value="UniProtKB-UniRule"/>
</dbReference>
<dbReference type="GO" id="GO:0006426">
    <property type="term" value="P:glycyl-tRNA aminoacylation"/>
    <property type="evidence" value="ECO:0007669"/>
    <property type="project" value="UniProtKB-UniRule"/>
</dbReference>
<dbReference type="HAMAP" id="MF_00255">
    <property type="entry name" value="Gly_tRNA_synth_beta"/>
    <property type="match status" value="1"/>
</dbReference>
<dbReference type="InterPro" id="IPR015944">
    <property type="entry name" value="Gly-tRNA-synth_bsu"/>
</dbReference>
<dbReference type="InterPro" id="IPR006194">
    <property type="entry name" value="Gly-tRNA-synth_heterodimer"/>
</dbReference>
<dbReference type="NCBIfam" id="TIGR00211">
    <property type="entry name" value="glyS"/>
    <property type="match status" value="1"/>
</dbReference>
<dbReference type="PANTHER" id="PTHR30075:SF2">
    <property type="entry name" value="GLYCINE--TRNA LIGASE, CHLOROPLASTIC_MITOCHONDRIAL 2"/>
    <property type="match status" value="1"/>
</dbReference>
<dbReference type="PANTHER" id="PTHR30075">
    <property type="entry name" value="GLYCYL-TRNA SYNTHETASE"/>
    <property type="match status" value="1"/>
</dbReference>
<dbReference type="Pfam" id="PF02092">
    <property type="entry name" value="tRNA_synt_2f"/>
    <property type="match status" value="1"/>
</dbReference>
<dbReference type="PRINTS" id="PR01045">
    <property type="entry name" value="TRNASYNTHGB"/>
</dbReference>
<dbReference type="SUPFAM" id="SSF109604">
    <property type="entry name" value="HD-domain/PDEase-like"/>
    <property type="match status" value="1"/>
</dbReference>
<dbReference type="PROSITE" id="PS50861">
    <property type="entry name" value="AA_TRNA_LIGASE_II_GLYAB"/>
    <property type="match status" value="1"/>
</dbReference>